<dbReference type="EMBL" id="DQ067440">
    <property type="protein sequence ID" value="AAY52631.1"/>
    <property type="molecule type" value="Genomic_RNA"/>
</dbReference>
<dbReference type="EMBL" id="CY014666">
    <property type="protein sequence ID" value="ABI84527.1"/>
    <property type="molecule type" value="Genomic_RNA"/>
</dbReference>
<dbReference type="SMR" id="Q3SBF2"/>
<dbReference type="ABCD" id="Q3SBF2">
    <property type="antibodies" value="5 sequenced antibodies"/>
</dbReference>
<dbReference type="PRO" id="PR:Q3SBF2"/>
<dbReference type="Proteomes" id="UP000115522">
    <property type="component" value="Genome"/>
</dbReference>
<dbReference type="GO" id="GO:0019029">
    <property type="term" value="C:helical viral capsid"/>
    <property type="evidence" value="ECO:0007669"/>
    <property type="project" value="UniProtKB-UniRule"/>
</dbReference>
<dbReference type="GO" id="GO:0043657">
    <property type="term" value="C:host cell"/>
    <property type="evidence" value="ECO:0007669"/>
    <property type="project" value="GOC"/>
</dbReference>
<dbReference type="GO" id="GO:0042025">
    <property type="term" value="C:host cell nucleus"/>
    <property type="evidence" value="ECO:0007669"/>
    <property type="project" value="UniProtKB-SubCell"/>
</dbReference>
<dbReference type="GO" id="GO:1990904">
    <property type="term" value="C:ribonucleoprotein complex"/>
    <property type="evidence" value="ECO:0007669"/>
    <property type="project" value="UniProtKB-KW"/>
</dbReference>
<dbReference type="GO" id="GO:0019013">
    <property type="term" value="C:viral nucleocapsid"/>
    <property type="evidence" value="ECO:0007669"/>
    <property type="project" value="UniProtKB-UniRule"/>
</dbReference>
<dbReference type="GO" id="GO:0003723">
    <property type="term" value="F:RNA binding"/>
    <property type="evidence" value="ECO:0007669"/>
    <property type="project" value="UniProtKB-UniRule"/>
</dbReference>
<dbReference type="GO" id="GO:0005198">
    <property type="term" value="F:structural molecule activity"/>
    <property type="evidence" value="ECO:0007669"/>
    <property type="project" value="UniProtKB-UniRule"/>
</dbReference>
<dbReference type="GO" id="GO:0046718">
    <property type="term" value="P:symbiont entry into host cell"/>
    <property type="evidence" value="ECO:0007669"/>
    <property type="project" value="UniProtKB-KW"/>
</dbReference>
<dbReference type="GO" id="GO:0075732">
    <property type="term" value="P:viral penetration into host nucleus"/>
    <property type="evidence" value="ECO:0007669"/>
    <property type="project" value="UniProtKB-UniRule"/>
</dbReference>
<dbReference type="HAMAP" id="MF_04070">
    <property type="entry name" value="INFV_NCAP"/>
    <property type="match status" value="1"/>
</dbReference>
<dbReference type="InterPro" id="IPR002141">
    <property type="entry name" value="Flu_NP"/>
</dbReference>
<dbReference type="Pfam" id="PF00506">
    <property type="entry name" value="Flu_NP"/>
    <property type="match status" value="1"/>
</dbReference>
<dbReference type="SUPFAM" id="SSF161003">
    <property type="entry name" value="flu NP-like"/>
    <property type="match status" value="1"/>
</dbReference>
<reference key="1">
    <citation type="journal article" date="2005" name="Virology">
        <title>Evolution of H9N2 influenza viruses from domestic poultry in Mainland China.</title>
        <authorList>
            <person name="Li C."/>
            <person name="Yu K."/>
            <person name="Tian G."/>
            <person name="Yu D."/>
            <person name="Liu L."/>
            <person name="Jing B."/>
            <person name="Ping J."/>
            <person name="Chen H."/>
        </authorList>
    </citation>
    <scope>NUCLEOTIDE SEQUENCE [GENOMIC RNA]</scope>
</reference>
<reference key="2">
    <citation type="journal article" date="2006" name="Science">
        <title>Large-scale sequence analysis of avian influenza isolates.</title>
        <authorList>
            <person name="Obenauer J.C."/>
            <person name="Denson J."/>
            <person name="Mehta P.K."/>
            <person name="Su X."/>
            <person name="Mukatira S."/>
            <person name="Finkelstein D.B."/>
            <person name="Xu X."/>
            <person name="Wang J."/>
            <person name="Ma J."/>
            <person name="Fan Y."/>
            <person name="Rakestraw K.M."/>
            <person name="Webster R.G."/>
            <person name="Hoffmann E."/>
            <person name="Krauss S."/>
            <person name="Zheng J."/>
            <person name="Zhang Z."/>
            <person name="Naeve C.W."/>
        </authorList>
    </citation>
    <scope>NUCLEOTIDE SEQUENCE [GENOMIC RNA]</scope>
</reference>
<organism>
    <name type="scientific">Influenza A virus (strain A/Turkey/Wisconsin/1/1966 H9N2)</name>
    <dbReference type="NCBI Taxonomy" id="385620"/>
    <lineage>
        <taxon>Viruses</taxon>
        <taxon>Riboviria</taxon>
        <taxon>Orthornavirae</taxon>
        <taxon>Negarnaviricota</taxon>
        <taxon>Polyploviricotina</taxon>
        <taxon>Insthoviricetes</taxon>
        <taxon>Articulavirales</taxon>
        <taxon>Orthomyxoviridae</taxon>
        <taxon>Alphainfluenzavirus</taxon>
        <taxon>Alphainfluenzavirus influenzae</taxon>
        <taxon>Influenza A virus</taxon>
    </lineage>
</organism>
<organismHost>
    <name type="scientific">Aves</name>
    <dbReference type="NCBI Taxonomy" id="8782"/>
</organismHost>
<sequence length="498" mass="56236">MASQGTKRSYEQMETGGERQNATEIRASVGRMVGGIGRFYIQMCTELKLSDYEGRLIQNSITIERMVLSAFDERRNKYLEEHPSAGKDPKKTGGPIYRRRDGKWIRELILYDKEEIRRIWRQANNGEDATAGLTHLMIWHSNLNDATYQRTRALVRTGMDPRMCSLMQGSTLPRRSGAAGAAVKGVGTMVMELIRMIKRGINDRNFWRGENGRLTRIAYERMCNILKGKFQTAAQRAMMDQVRESRNPGNAEIEDLIFLARSALILRGSVAHKSCLPACVYGLAVASGYDFEREGYSLVGIDPFRLLQNSQVFSLVRPNENPAHKSQLVWMACHSAAFEDLRVSSFIRGTRVVPRGQLSTRGVQIASNENMETMDSSTLELRSRYWAIRTRSGGNTNQQRASAGQISVQPTFSVQRNLPFERATIMAAFTGNTEGRTSDMRTEIIRMMENARPEDVSFQGRGVFELSDEKATNPIVPSFDMSNEGSYFFGDNAEEYDN</sequence>
<comment type="function">
    <text evidence="1">Encapsidates the negative strand viral RNA, protecting it from nucleases. The encapsidated genomic RNA is termed the ribonucleoprotein (RNP) and serves as template for transcription and replication. The RNP needs to be localized in the host nucleus to start an infectious cycle, but is too large to diffuse through the nuclear pore complex. NP comprises at least 2 nuclear localization signals that are responsible for the active RNP import into the nucleus through cellular importin alpha/beta pathway. Later in the infection, nclear export of RNPs are mediated through viral proteins NEP interacting with M1 which binds nucleoproteins. It is possible that nucleoprotein binds directly host exportin-1/XPO1 and plays an active role in RNPs nuclear export. M1 interaction with RNP seems to hide nucleoprotein's nuclear localization signals. Soon after a virion infects a new cell, M1 dissociates from the RNP under acidification of the virion driven by M2 protein. Dissociation of M1 from RNP unmasks nucleoprotein's nuclear localization signals, targeting the RNP to the nucleus.</text>
</comment>
<comment type="subunit">
    <text evidence="1">Homomultimerizes to form the nucleocapsid. May bind host exportin-1/XPO1. Binds to viral genomic RNA. Protein-RNA contacts are mediated by a combination of electrostatic interactions between positively charged residues and the phosphate backbone and planar interactions between aromatic side chains and bases.</text>
</comment>
<comment type="subcellular location">
    <subcellularLocation>
        <location evidence="1">Virion</location>
    </subcellularLocation>
    <subcellularLocation>
        <location evidence="1">Host nucleus</location>
    </subcellularLocation>
</comment>
<comment type="PTM">
    <text evidence="1">Late in virus-infected cells, may be cleaved from a 56-kDa protein to a 53-kDa protein by a cellular caspase. This cleavage might be a marker for the onset of apoptosis in infected cells or have a specific function in virus host interaction.</text>
</comment>
<comment type="similarity">
    <text evidence="1">Belongs to the influenza viruses nucleoprotein family.</text>
</comment>
<evidence type="ECO:0000255" key="1">
    <source>
        <dbReference type="HAMAP-Rule" id="MF_04070"/>
    </source>
</evidence>
<evidence type="ECO:0000256" key="2">
    <source>
        <dbReference type="SAM" id="MobiDB-lite"/>
    </source>
</evidence>
<gene>
    <name evidence="1" type="primary">NP</name>
</gene>
<proteinExistence type="inferred from homology"/>
<accession>Q3SBF2</accession>
<accession>Q0A455</accession>
<feature type="chain" id="PRO_0000402430" description="Nucleoprotein">
    <location>
        <begin position="1"/>
        <end position="498"/>
    </location>
</feature>
<feature type="region of interest" description="Disordered" evidence="2">
    <location>
        <begin position="1"/>
        <end position="21"/>
    </location>
</feature>
<feature type="short sequence motif" description="Unconventional nuclear localization signal" evidence="1">
    <location>
        <begin position="1"/>
        <end position="18"/>
    </location>
</feature>
<feature type="short sequence motif" description="Bipartite nuclear localization signal" evidence="1">
    <location>
        <begin position="198"/>
        <end position="216"/>
    </location>
</feature>
<feature type="sequence conflict" description="In Ref. 2; ABI84527." ref="2">
    <original>L</original>
    <variation>R</variation>
    <location>
        <position position="214"/>
    </location>
</feature>
<feature type="sequence conflict" description="In Ref. 2; ABI84527." ref="2">
    <original>V</original>
    <variation>I</variation>
    <location>
        <position position="316"/>
    </location>
</feature>
<keyword id="KW-0167">Capsid protein</keyword>
<keyword id="KW-1139">Helical capsid protein</keyword>
<keyword id="KW-1048">Host nucleus</keyword>
<keyword id="KW-0945">Host-virus interaction</keyword>
<keyword id="KW-0687">Ribonucleoprotein</keyword>
<keyword id="KW-0694">RNA-binding</keyword>
<keyword id="KW-0543">Viral nucleoprotein</keyword>
<keyword id="KW-1163">Viral penetration into host nucleus</keyword>
<keyword id="KW-0946">Virion</keyword>
<keyword id="KW-1160">Virus entry into host cell</keyword>
<protein>
    <recommendedName>
        <fullName evidence="1">Nucleoprotein</fullName>
    </recommendedName>
    <alternativeName>
        <fullName evidence="1">Nucleocapsid protein</fullName>
        <shortName evidence="1">Protein N</shortName>
    </alternativeName>
</protein>
<name>NCAP_I66A1</name>